<sequence>MLIINDNNLSGLSLQRVNGTGELSVQFKDGRSRISRLYQEGAAKIRMPQAVTGPLEAILINTSGGLTGGDRLKWDVALDDGASAVITTQACERIYRSGGGEARIATRLKAAKGTRLAWLPQETILFNRSILSRRLDVELEEGAQMLVVEATVFGRLAMGERVVAARFADRWRVRLGGRVIHAEEFRLGPDVGAELQAPAVAGGACAMATVLMVCEQAGRHLETARAIIGEEGGCSLWRVGKASKLVVRLYAPDSYALRRRLCPLVALLNGKAGLPKVWTI</sequence>
<gene>
    <name evidence="1" type="primary">ureD1</name>
    <name type="ordered locus">BCAN_A0270</name>
</gene>
<dbReference type="EMBL" id="CP000872">
    <property type="protein sequence ID" value="ABX61362.1"/>
    <property type="molecule type" value="Genomic_DNA"/>
</dbReference>
<dbReference type="RefSeq" id="WP_004689446.1">
    <property type="nucleotide sequence ID" value="NC_010103.1"/>
</dbReference>
<dbReference type="SMR" id="A9M7V2"/>
<dbReference type="KEGG" id="bcs:BCAN_A0270"/>
<dbReference type="HOGENOM" id="CLU_056339_2_0_5"/>
<dbReference type="PhylomeDB" id="A9M7V2"/>
<dbReference type="Proteomes" id="UP000001385">
    <property type="component" value="Chromosome I"/>
</dbReference>
<dbReference type="GO" id="GO:0005737">
    <property type="term" value="C:cytoplasm"/>
    <property type="evidence" value="ECO:0007669"/>
    <property type="project" value="UniProtKB-SubCell"/>
</dbReference>
<dbReference type="GO" id="GO:0016151">
    <property type="term" value="F:nickel cation binding"/>
    <property type="evidence" value="ECO:0007669"/>
    <property type="project" value="UniProtKB-UniRule"/>
</dbReference>
<dbReference type="HAMAP" id="MF_01384">
    <property type="entry name" value="UreD"/>
    <property type="match status" value="1"/>
</dbReference>
<dbReference type="InterPro" id="IPR002669">
    <property type="entry name" value="UreD"/>
</dbReference>
<dbReference type="PANTHER" id="PTHR33643">
    <property type="entry name" value="UREASE ACCESSORY PROTEIN D"/>
    <property type="match status" value="1"/>
</dbReference>
<dbReference type="PANTHER" id="PTHR33643:SF1">
    <property type="entry name" value="UREASE ACCESSORY PROTEIN D"/>
    <property type="match status" value="1"/>
</dbReference>
<dbReference type="Pfam" id="PF01774">
    <property type="entry name" value="UreD"/>
    <property type="match status" value="1"/>
</dbReference>
<reference key="1">
    <citation type="submission" date="2007-10" db="EMBL/GenBank/DDBJ databases">
        <title>Brucella canis ATCC 23365 whole genome shotgun sequencing project.</title>
        <authorList>
            <person name="Setubal J.C."/>
            <person name="Bowns C."/>
            <person name="Boyle S."/>
            <person name="Crasta O.R."/>
            <person name="Czar M.J."/>
            <person name="Dharmanolla C."/>
            <person name="Gillespie J.J."/>
            <person name="Kenyon R.W."/>
            <person name="Lu J."/>
            <person name="Mane S."/>
            <person name="Mohapatra S."/>
            <person name="Nagrani S."/>
            <person name="Purkayastha A."/>
            <person name="Rajasimha H.K."/>
            <person name="Shallom J.M."/>
            <person name="Shallom S."/>
            <person name="Shukla M."/>
            <person name="Snyder E.E."/>
            <person name="Sobral B.W."/>
            <person name="Wattam A.R."/>
            <person name="Will R."/>
            <person name="Williams K."/>
            <person name="Yoo H."/>
            <person name="Bruce D."/>
            <person name="Detter C."/>
            <person name="Munk C."/>
            <person name="Brettin T.S."/>
        </authorList>
    </citation>
    <scope>NUCLEOTIDE SEQUENCE [LARGE SCALE GENOMIC DNA]</scope>
    <source>
        <strain>ATCC 23365 / NCTC 10854 / RM-666</strain>
    </source>
</reference>
<evidence type="ECO:0000255" key="1">
    <source>
        <dbReference type="HAMAP-Rule" id="MF_01384"/>
    </source>
</evidence>
<comment type="function">
    <text evidence="1">Required for maturation of urease via the functional incorporation of the urease nickel metallocenter.</text>
</comment>
<comment type="subunit">
    <text evidence="1">UreD, UreF and UreG form a complex that acts as a GTP-hydrolysis-dependent molecular chaperone, activating the urease apoprotein by helping to assemble the nickel containing metallocenter of UreC. The UreE protein probably delivers the nickel.</text>
</comment>
<comment type="subcellular location">
    <subcellularLocation>
        <location evidence="1">Cytoplasm</location>
    </subcellularLocation>
</comment>
<comment type="similarity">
    <text evidence="1">Belongs to the UreD family.</text>
</comment>
<accession>A9M7V2</accession>
<protein>
    <recommendedName>
        <fullName evidence="1">Urease accessory protein UreD 1</fullName>
    </recommendedName>
</protein>
<feature type="chain" id="PRO_0000340421" description="Urease accessory protein UreD 1">
    <location>
        <begin position="1"/>
        <end position="280"/>
    </location>
</feature>
<name>URED1_BRUC2</name>
<proteinExistence type="inferred from homology"/>
<keyword id="KW-0143">Chaperone</keyword>
<keyword id="KW-0963">Cytoplasm</keyword>
<keyword id="KW-0996">Nickel insertion</keyword>
<keyword id="KW-1185">Reference proteome</keyword>
<organism>
    <name type="scientific">Brucella canis (strain ATCC 23365 / NCTC 10854 / RM-666)</name>
    <dbReference type="NCBI Taxonomy" id="483179"/>
    <lineage>
        <taxon>Bacteria</taxon>
        <taxon>Pseudomonadati</taxon>
        <taxon>Pseudomonadota</taxon>
        <taxon>Alphaproteobacteria</taxon>
        <taxon>Hyphomicrobiales</taxon>
        <taxon>Brucellaceae</taxon>
        <taxon>Brucella/Ochrobactrum group</taxon>
        <taxon>Brucella</taxon>
    </lineage>
</organism>